<gene>
    <name evidence="1" type="primary">rplS</name>
    <name type="ordered locus">Dtur_1533</name>
</gene>
<name>RL19_DICTD</name>
<protein>
    <recommendedName>
        <fullName evidence="1">Large ribosomal subunit protein bL19</fullName>
    </recommendedName>
    <alternativeName>
        <fullName evidence="2">50S ribosomal protein L19</fullName>
    </alternativeName>
</protein>
<reference key="1">
    <citation type="journal article" date="2016" name="Front. Microbiol.">
        <title>The complete genome sequence of hyperthermophile Dictyoglomus turgidum DSM 6724 reveals a specialized carbohydrate fermentor.</title>
        <authorList>
            <person name="Brumm P.J."/>
            <person name="Gowda K."/>
            <person name="Robb F.T."/>
            <person name="Mead D.A."/>
        </authorList>
    </citation>
    <scope>NUCLEOTIDE SEQUENCE [LARGE SCALE GENOMIC DNA]</scope>
    <source>
        <strain>DSM 6724 / Z-1310</strain>
    </source>
</reference>
<accession>B8E2G3</accession>
<feature type="chain" id="PRO_1000193827" description="Large ribosomal subunit protein bL19">
    <location>
        <begin position="1"/>
        <end position="118"/>
    </location>
</feature>
<comment type="function">
    <text evidence="1">This protein is located at the 30S-50S ribosomal subunit interface and may play a role in the structure and function of the aminoacyl-tRNA binding site.</text>
</comment>
<comment type="similarity">
    <text evidence="1">Belongs to the bacterial ribosomal protein bL19 family.</text>
</comment>
<evidence type="ECO:0000255" key="1">
    <source>
        <dbReference type="HAMAP-Rule" id="MF_00402"/>
    </source>
</evidence>
<evidence type="ECO:0000305" key="2"/>
<keyword id="KW-1185">Reference proteome</keyword>
<keyword id="KW-0687">Ribonucleoprotein</keyword>
<keyword id="KW-0689">Ribosomal protein</keyword>
<organism>
    <name type="scientific">Dictyoglomus turgidum (strain DSM 6724 / Z-1310)</name>
    <dbReference type="NCBI Taxonomy" id="515635"/>
    <lineage>
        <taxon>Bacteria</taxon>
        <taxon>Pseudomonadati</taxon>
        <taxon>Dictyoglomota</taxon>
        <taxon>Dictyoglomia</taxon>
        <taxon>Dictyoglomales</taxon>
        <taxon>Dictyoglomaceae</taxon>
        <taxon>Dictyoglomus</taxon>
    </lineage>
</organism>
<dbReference type="EMBL" id="CP001251">
    <property type="protein sequence ID" value="ACK42807.1"/>
    <property type="molecule type" value="Genomic_DNA"/>
</dbReference>
<dbReference type="RefSeq" id="WP_012583883.1">
    <property type="nucleotide sequence ID" value="NC_011661.1"/>
</dbReference>
<dbReference type="RefSeq" id="YP_002353421.1">
    <property type="nucleotide sequence ID" value="NC_011661.1"/>
</dbReference>
<dbReference type="SMR" id="B8E2G3"/>
<dbReference type="FunCoup" id="B8E2G3">
    <property type="interactions" value="386"/>
</dbReference>
<dbReference type="STRING" id="515635.Dtur_1533"/>
<dbReference type="EnsemblBacteria" id="ACK42807">
    <property type="protein sequence ID" value="ACK42807"/>
    <property type="gene ID" value="Dtur_1533"/>
</dbReference>
<dbReference type="KEGG" id="dtu:Dtur_1533"/>
<dbReference type="PATRIC" id="fig|515635.4.peg.1582"/>
<dbReference type="eggNOG" id="COG0335">
    <property type="taxonomic scope" value="Bacteria"/>
</dbReference>
<dbReference type="HOGENOM" id="CLU_103507_2_1_0"/>
<dbReference type="InParanoid" id="B8E2G3"/>
<dbReference type="OrthoDB" id="9803541at2"/>
<dbReference type="Proteomes" id="UP000007719">
    <property type="component" value="Chromosome"/>
</dbReference>
<dbReference type="GO" id="GO:0022625">
    <property type="term" value="C:cytosolic large ribosomal subunit"/>
    <property type="evidence" value="ECO:0000318"/>
    <property type="project" value="GO_Central"/>
</dbReference>
<dbReference type="GO" id="GO:0003735">
    <property type="term" value="F:structural constituent of ribosome"/>
    <property type="evidence" value="ECO:0000318"/>
    <property type="project" value="GO_Central"/>
</dbReference>
<dbReference type="GO" id="GO:0006412">
    <property type="term" value="P:translation"/>
    <property type="evidence" value="ECO:0007669"/>
    <property type="project" value="UniProtKB-UniRule"/>
</dbReference>
<dbReference type="FunFam" id="2.30.30.790:FF:000001">
    <property type="entry name" value="50S ribosomal protein L19"/>
    <property type="match status" value="1"/>
</dbReference>
<dbReference type="Gene3D" id="2.30.30.790">
    <property type="match status" value="1"/>
</dbReference>
<dbReference type="HAMAP" id="MF_00402">
    <property type="entry name" value="Ribosomal_bL19"/>
    <property type="match status" value="1"/>
</dbReference>
<dbReference type="InterPro" id="IPR001857">
    <property type="entry name" value="Ribosomal_bL19"/>
</dbReference>
<dbReference type="InterPro" id="IPR018257">
    <property type="entry name" value="Ribosomal_bL19_CS"/>
</dbReference>
<dbReference type="InterPro" id="IPR038657">
    <property type="entry name" value="Ribosomal_bL19_sf"/>
</dbReference>
<dbReference type="InterPro" id="IPR008991">
    <property type="entry name" value="Translation_prot_SH3-like_sf"/>
</dbReference>
<dbReference type="NCBIfam" id="TIGR01024">
    <property type="entry name" value="rplS_bact"/>
    <property type="match status" value="1"/>
</dbReference>
<dbReference type="PANTHER" id="PTHR15680:SF9">
    <property type="entry name" value="LARGE RIBOSOMAL SUBUNIT PROTEIN BL19M"/>
    <property type="match status" value="1"/>
</dbReference>
<dbReference type="PANTHER" id="PTHR15680">
    <property type="entry name" value="RIBOSOMAL PROTEIN L19"/>
    <property type="match status" value="1"/>
</dbReference>
<dbReference type="Pfam" id="PF01245">
    <property type="entry name" value="Ribosomal_L19"/>
    <property type="match status" value="1"/>
</dbReference>
<dbReference type="PIRSF" id="PIRSF002191">
    <property type="entry name" value="Ribosomal_L19"/>
    <property type="match status" value="1"/>
</dbReference>
<dbReference type="PRINTS" id="PR00061">
    <property type="entry name" value="RIBOSOMALL19"/>
</dbReference>
<dbReference type="SUPFAM" id="SSF50104">
    <property type="entry name" value="Translation proteins SH3-like domain"/>
    <property type="match status" value="1"/>
</dbReference>
<dbReference type="PROSITE" id="PS01015">
    <property type="entry name" value="RIBOSOMAL_L19"/>
    <property type="match status" value="1"/>
</dbReference>
<sequence length="118" mass="13820">MDLIIQNLEKEYMKKDIPEIWPGDTVRVHYRIVEGDKERIQVYEGVVIAKKHGGIRETITVRKVVQGVGVERIFPLHSPLVEKIEVVRRGRVRRAKLYYLRERKGKSAKIAEREENEG</sequence>
<proteinExistence type="inferred from homology"/>